<organism>
    <name type="scientific">Klebsiella pneumoniae subsp. pneumoniae (strain ATCC 700721 / MGH 78578)</name>
    <dbReference type="NCBI Taxonomy" id="272620"/>
    <lineage>
        <taxon>Bacteria</taxon>
        <taxon>Pseudomonadati</taxon>
        <taxon>Pseudomonadota</taxon>
        <taxon>Gammaproteobacteria</taxon>
        <taxon>Enterobacterales</taxon>
        <taxon>Enterobacteriaceae</taxon>
        <taxon>Klebsiella/Raoultella group</taxon>
        <taxon>Klebsiella</taxon>
        <taxon>Klebsiella pneumoniae complex</taxon>
    </lineage>
</organism>
<name>TIG_KLEP7</name>
<proteinExistence type="inferred from homology"/>
<reference key="1">
    <citation type="submission" date="2006-09" db="EMBL/GenBank/DDBJ databases">
        <authorList>
            <consortium name="The Klebsiella pneumonia Genome Sequencing Project"/>
            <person name="McClelland M."/>
            <person name="Sanderson E.K."/>
            <person name="Spieth J."/>
            <person name="Clifton W.S."/>
            <person name="Latreille P."/>
            <person name="Sabo A."/>
            <person name="Pepin K."/>
            <person name="Bhonagiri V."/>
            <person name="Porwollik S."/>
            <person name="Ali J."/>
            <person name="Wilson R.K."/>
        </authorList>
    </citation>
    <scope>NUCLEOTIDE SEQUENCE [LARGE SCALE GENOMIC DNA]</scope>
    <source>
        <strain>ATCC 700721 / MGH 78578</strain>
    </source>
</reference>
<feature type="chain" id="PRO_1000022693" description="Trigger factor">
    <location>
        <begin position="1"/>
        <end position="432"/>
    </location>
</feature>
<feature type="domain" description="PPIase FKBP-type" evidence="1">
    <location>
        <begin position="161"/>
        <end position="246"/>
    </location>
</feature>
<comment type="function">
    <text evidence="1">Involved in protein export. Acts as a chaperone by maintaining the newly synthesized protein in an open conformation. Functions as a peptidyl-prolyl cis-trans isomerase.</text>
</comment>
<comment type="catalytic activity">
    <reaction evidence="1">
        <text>[protein]-peptidylproline (omega=180) = [protein]-peptidylproline (omega=0)</text>
        <dbReference type="Rhea" id="RHEA:16237"/>
        <dbReference type="Rhea" id="RHEA-COMP:10747"/>
        <dbReference type="Rhea" id="RHEA-COMP:10748"/>
        <dbReference type="ChEBI" id="CHEBI:83833"/>
        <dbReference type="ChEBI" id="CHEBI:83834"/>
        <dbReference type="EC" id="5.2.1.8"/>
    </reaction>
</comment>
<comment type="subcellular location">
    <subcellularLocation>
        <location>Cytoplasm</location>
    </subcellularLocation>
    <text evidence="1">About half TF is bound to the ribosome near the polypeptide exit tunnel while the other half is free in the cytoplasm.</text>
</comment>
<comment type="domain">
    <text evidence="1">Consists of 3 domains; the N-terminus binds the ribosome, the middle domain has PPIase activity, while the C-terminus has intrinsic chaperone activity on its own.</text>
</comment>
<comment type="similarity">
    <text evidence="1">Belongs to the FKBP-type PPIase family. Tig subfamily.</text>
</comment>
<protein>
    <recommendedName>
        <fullName evidence="1">Trigger factor</fullName>
        <shortName evidence="1">TF</shortName>
        <ecNumber evidence="1">5.2.1.8</ecNumber>
    </recommendedName>
    <alternativeName>
        <fullName evidence="1">PPIase</fullName>
    </alternativeName>
</protein>
<gene>
    <name evidence="1" type="primary">tig</name>
    <name type="ordered locus">KPN78578_03890</name>
    <name type="ORF">KPN_00398</name>
</gene>
<keyword id="KW-0131">Cell cycle</keyword>
<keyword id="KW-0132">Cell division</keyword>
<keyword id="KW-0143">Chaperone</keyword>
<keyword id="KW-0963">Cytoplasm</keyword>
<keyword id="KW-0413">Isomerase</keyword>
<keyword id="KW-0697">Rotamase</keyword>
<evidence type="ECO:0000255" key="1">
    <source>
        <dbReference type="HAMAP-Rule" id="MF_00303"/>
    </source>
</evidence>
<sequence length="432" mass="48113">MQVSVETTQGLGRRVTITIAADSIENAVKSELVNVAKKVRIDGFRKGKVPMNIVAQRYGASVRQDVLGDLMSRHFVDAIIKEKINPAGAPNYVPGEYKLGEDFTYAVEFEVYPEVELQGLDAIEVEKPVVEVTDADVDTMLETLRKQQATWKEKEGAVDAEDRVTIDFTGSVDGEEFEGGKASDFVLAMGQGRMIPGFEDGIKGHKAGEEFTIDVTFPEEYHAENLKGKAAKFVINLKKVEERELPELTEEFIKRFGVEDGSVAGLRAEVRKNMERELKGAVRNRVKSQAIEGLVKANEIDVPAALIDSEIDVLRRQAAQRFGGNEKQALELPRELFEEQAKRRVVVGLLLGEVIRTNELKADEERVKALIEEMASAYEDPSEVVEFYSKNKELMDNMRNVALEEQAVEAVLAKAKVSEKATSFNELMNQQA</sequence>
<accession>A6T5H9</accession>
<dbReference type="EC" id="5.2.1.8" evidence="1"/>
<dbReference type="EMBL" id="CP000647">
    <property type="protein sequence ID" value="ABR75850.1"/>
    <property type="molecule type" value="Genomic_DNA"/>
</dbReference>
<dbReference type="RefSeq" id="WP_004147333.1">
    <property type="nucleotide sequence ID" value="NC_009648.1"/>
</dbReference>
<dbReference type="BMRB" id="A6T5H9"/>
<dbReference type="SMR" id="A6T5H9"/>
<dbReference type="STRING" id="272620.KPN_00398"/>
<dbReference type="jPOST" id="A6T5H9"/>
<dbReference type="PaxDb" id="272620-KPN_00398"/>
<dbReference type="EnsemblBacteria" id="ABR75850">
    <property type="protein sequence ID" value="ABR75850"/>
    <property type="gene ID" value="KPN_00398"/>
</dbReference>
<dbReference type="KEGG" id="kpn:KPN_00398"/>
<dbReference type="HOGENOM" id="CLU_033058_2_0_6"/>
<dbReference type="Proteomes" id="UP000000265">
    <property type="component" value="Chromosome"/>
</dbReference>
<dbReference type="GO" id="GO:0005737">
    <property type="term" value="C:cytoplasm"/>
    <property type="evidence" value="ECO:0007669"/>
    <property type="project" value="UniProtKB-SubCell"/>
</dbReference>
<dbReference type="GO" id="GO:0003755">
    <property type="term" value="F:peptidyl-prolyl cis-trans isomerase activity"/>
    <property type="evidence" value="ECO:0007669"/>
    <property type="project" value="UniProtKB-UniRule"/>
</dbReference>
<dbReference type="GO" id="GO:0044183">
    <property type="term" value="F:protein folding chaperone"/>
    <property type="evidence" value="ECO:0007669"/>
    <property type="project" value="TreeGrafter"/>
</dbReference>
<dbReference type="GO" id="GO:0043022">
    <property type="term" value="F:ribosome binding"/>
    <property type="evidence" value="ECO:0007669"/>
    <property type="project" value="TreeGrafter"/>
</dbReference>
<dbReference type="GO" id="GO:0051083">
    <property type="term" value="P:'de novo' cotranslational protein folding"/>
    <property type="evidence" value="ECO:0007669"/>
    <property type="project" value="TreeGrafter"/>
</dbReference>
<dbReference type="GO" id="GO:0051301">
    <property type="term" value="P:cell division"/>
    <property type="evidence" value="ECO:0007669"/>
    <property type="project" value="UniProtKB-KW"/>
</dbReference>
<dbReference type="GO" id="GO:0061077">
    <property type="term" value="P:chaperone-mediated protein folding"/>
    <property type="evidence" value="ECO:0007669"/>
    <property type="project" value="TreeGrafter"/>
</dbReference>
<dbReference type="GO" id="GO:0015031">
    <property type="term" value="P:protein transport"/>
    <property type="evidence" value="ECO:0007669"/>
    <property type="project" value="UniProtKB-UniRule"/>
</dbReference>
<dbReference type="GO" id="GO:0043335">
    <property type="term" value="P:protein unfolding"/>
    <property type="evidence" value="ECO:0007669"/>
    <property type="project" value="TreeGrafter"/>
</dbReference>
<dbReference type="FunFam" id="1.10.3120.10:FF:000001">
    <property type="entry name" value="Trigger factor"/>
    <property type="match status" value="1"/>
</dbReference>
<dbReference type="FunFam" id="3.10.50.40:FF:000001">
    <property type="entry name" value="Trigger factor"/>
    <property type="match status" value="1"/>
</dbReference>
<dbReference type="FunFam" id="3.30.70.1050:FF:000001">
    <property type="entry name" value="Trigger factor"/>
    <property type="match status" value="1"/>
</dbReference>
<dbReference type="Gene3D" id="3.10.50.40">
    <property type="match status" value="1"/>
</dbReference>
<dbReference type="Gene3D" id="3.30.70.1050">
    <property type="entry name" value="Trigger factor ribosome-binding domain"/>
    <property type="match status" value="1"/>
</dbReference>
<dbReference type="Gene3D" id="1.10.3120.10">
    <property type="entry name" value="Trigger factor, C-terminal domain"/>
    <property type="match status" value="1"/>
</dbReference>
<dbReference type="HAMAP" id="MF_00303">
    <property type="entry name" value="Trigger_factor_Tig"/>
    <property type="match status" value="1"/>
</dbReference>
<dbReference type="InterPro" id="IPR046357">
    <property type="entry name" value="PPIase_dom_sf"/>
</dbReference>
<dbReference type="InterPro" id="IPR001179">
    <property type="entry name" value="PPIase_FKBP_dom"/>
</dbReference>
<dbReference type="InterPro" id="IPR005215">
    <property type="entry name" value="Trig_fac"/>
</dbReference>
<dbReference type="InterPro" id="IPR008880">
    <property type="entry name" value="Trigger_fac_C"/>
</dbReference>
<dbReference type="InterPro" id="IPR037041">
    <property type="entry name" value="Trigger_fac_C_sf"/>
</dbReference>
<dbReference type="InterPro" id="IPR008881">
    <property type="entry name" value="Trigger_fac_ribosome-bd_bac"/>
</dbReference>
<dbReference type="InterPro" id="IPR036611">
    <property type="entry name" value="Trigger_fac_ribosome-bd_sf"/>
</dbReference>
<dbReference type="InterPro" id="IPR027304">
    <property type="entry name" value="Trigger_fact/SurA_dom_sf"/>
</dbReference>
<dbReference type="NCBIfam" id="TIGR00115">
    <property type="entry name" value="tig"/>
    <property type="match status" value="1"/>
</dbReference>
<dbReference type="PANTHER" id="PTHR30560">
    <property type="entry name" value="TRIGGER FACTOR CHAPERONE AND PEPTIDYL-PROLYL CIS/TRANS ISOMERASE"/>
    <property type="match status" value="1"/>
</dbReference>
<dbReference type="PANTHER" id="PTHR30560:SF3">
    <property type="entry name" value="TRIGGER FACTOR-LIKE PROTEIN TIG, CHLOROPLASTIC"/>
    <property type="match status" value="1"/>
</dbReference>
<dbReference type="Pfam" id="PF00254">
    <property type="entry name" value="FKBP_C"/>
    <property type="match status" value="1"/>
</dbReference>
<dbReference type="Pfam" id="PF05698">
    <property type="entry name" value="Trigger_C"/>
    <property type="match status" value="1"/>
</dbReference>
<dbReference type="Pfam" id="PF05697">
    <property type="entry name" value="Trigger_N"/>
    <property type="match status" value="1"/>
</dbReference>
<dbReference type="PIRSF" id="PIRSF003095">
    <property type="entry name" value="Trigger_factor"/>
    <property type="match status" value="1"/>
</dbReference>
<dbReference type="SUPFAM" id="SSF54534">
    <property type="entry name" value="FKBP-like"/>
    <property type="match status" value="1"/>
</dbReference>
<dbReference type="SUPFAM" id="SSF109998">
    <property type="entry name" value="Triger factor/SurA peptide-binding domain-like"/>
    <property type="match status" value="1"/>
</dbReference>
<dbReference type="SUPFAM" id="SSF102735">
    <property type="entry name" value="Trigger factor ribosome-binding domain"/>
    <property type="match status" value="1"/>
</dbReference>
<dbReference type="PROSITE" id="PS50059">
    <property type="entry name" value="FKBP_PPIASE"/>
    <property type="match status" value="1"/>
</dbReference>